<evidence type="ECO:0000250" key="1"/>
<evidence type="ECO:0000255" key="2"/>
<evidence type="ECO:0000305" key="3"/>
<reference key="1">
    <citation type="book" date="2006" name="Gram positive pathogens, 2nd edition">
        <title>The Staphylococcus aureus NCTC 8325 genome.</title>
        <editorList>
            <person name="Fischetti V."/>
            <person name="Novick R."/>
            <person name="Ferretti J."/>
            <person name="Portnoy D."/>
            <person name="Rood J."/>
        </editorList>
        <authorList>
            <person name="Gillaspy A.F."/>
            <person name="Worrell V."/>
            <person name="Orvis J."/>
            <person name="Roe B.A."/>
            <person name="Dyer D.W."/>
            <person name="Iandolo J.J."/>
        </authorList>
    </citation>
    <scope>NUCLEOTIDE SEQUENCE [LARGE SCALE GENOMIC DNA]</scope>
    <source>
        <strain>NCTC 8325 / PS 47</strain>
    </source>
</reference>
<keyword id="KW-0125">Carotenoid biosynthesis</keyword>
<keyword id="KW-1003">Cell membrane</keyword>
<keyword id="KW-0328">Glycosyltransferase</keyword>
<keyword id="KW-0472">Membrane</keyword>
<keyword id="KW-1185">Reference proteome</keyword>
<keyword id="KW-0808">Transferase</keyword>
<keyword id="KW-0812">Transmembrane</keyword>
<keyword id="KW-1133">Transmembrane helix</keyword>
<gene>
    <name type="primary">crtQ</name>
    <name type="ordered locus">SAOUHSC_02880</name>
</gene>
<organism>
    <name type="scientific">Staphylococcus aureus (strain NCTC 8325 / PS 47)</name>
    <dbReference type="NCBI Taxonomy" id="93061"/>
    <lineage>
        <taxon>Bacteria</taxon>
        <taxon>Bacillati</taxon>
        <taxon>Bacillota</taxon>
        <taxon>Bacilli</taxon>
        <taxon>Bacillales</taxon>
        <taxon>Staphylococcaceae</taxon>
        <taxon>Staphylococcus</taxon>
    </lineage>
</organism>
<dbReference type="EC" id="2.4.1.-"/>
<dbReference type="EMBL" id="CP000253">
    <property type="protein sequence ID" value="ABD31877.1"/>
    <property type="molecule type" value="Genomic_DNA"/>
</dbReference>
<dbReference type="RefSeq" id="WP_000871731.1">
    <property type="nucleotide sequence ID" value="NZ_LS483365.1"/>
</dbReference>
<dbReference type="RefSeq" id="YP_501334.1">
    <property type="nucleotide sequence ID" value="NC_007795.1"/>
</dbReference>
<dbReference type="SMR" id="Q2FV58"/>
<dbReference type="STRING" id="93061.SAOUHSC_02880"/>
<dbReference type="CAZy" id="GT2">
    <property type="family name" value="Glycosyltransferase Family 2"/>
</dbReference>
<dbReference type="PaxDb" id="1280-SAXN108_2814"/>
<dbReference type="GeneID" id="3921550"/>
<dbReference type="KEGG" id="sao:SAOUHSC_02880"/>
<dbReference type="PATRIC" id="fig|93061.5.peg.2603"/>
<dbReference type="eggNOG" id="COG0463">
    <property type="taxonomic scope" value="Bacteria"/>
</dbReference>
<dbReference type="HOGENOM" id="CLU_038143_1_0_9"/>
<dbReference type="OrthoDB" id="9806525at2"/>
<dbReference type="UniPathway" id="UPA00029">
    <property type="reaction ID" value="UER00559"/>
</dbReference>
<dbReference type="PRO" id="PR:Q2FV58"/>
<dbReference type="Proteomes" id="UP000008816">
    <property type="component" value="Chromosome"/>
</dbReference>
<dbReference type="GO" id="GO:0005886">
    <property type="term" value="C:plasma membrane"/>
    <property type="evidence" value="ECO:0007669"/>
    <property type="project" value="UniProtKB-SubCell"/>
</dbReference>
<dbReference type="GO" id="GO:0016757">
    <property type="term" value="F:glycosyltransferase activity"/>
    <property type="evidence" value="ECO:0007669"/>
    <property type="project" value="UniProtKB-KW"/>
</dbReference>
<dbReference type="GO" id="GO:0016117">
    <property type="term" value="P:carotenoid biosynthetic process"/>
    <property type="evidence" value="ECO:0007669"/>
    <property type="project" value="UniProtKB-KW"/>
</dbReference>
<dbReference type="GO" id="GO:0006487">
    <property type="term" value="P:protein N-linked glycosylation"/>
    <property type="evidence" value="ECO:0000318"/>
    <property type="project" value="GO_Central"/>
</dbReference>
<dbReference type="CDD" id="cd00761">
    <property type="entry name" value="Glyco_tranf_GTA_type"/>
    <property type="match status" value="1"/>
</dbReference>
<dbReference type="FunFam" id="3.90.550.10:FF:000172">
    <property type="entry name" value="Hpnb"/>
    <property type="match status" value="1"/>
</dbReference>
<dbReference type="Gene3D" id="3.90.550.10">
    <property type="entry name" value="Spore Coat Polysaccharide Biosynthesis Protein SpsA, Chain A"/>
    <property type="match status" value="1"/>
</dbReference>
<dbReference type="InterPro" id="IPR001173">
    <property type="entry name" value="Glyco_trans_2-like"/>
</dbReference>
<dbReference type="InterPro" id="IPR029044">
    <property type="entry name" value="Nucleotide-diphossugar_trans"/>
</dbReference>
<dbReference type="PANTHER" id="PTHR43646">
    <property type="entry name" value="GLYCOSYLTRANSFERASE"/>
    <property type="match status" value="1"/>
</dbReference>
<dbReference type="PANTHER" id="PTHR43646:SF2">
    <property type="entry name" value="GLYCOSYLTRANSFERASE 2-LIKE DOMAIN-CONTAINING PROTEIN"/>
    <property type="match status" value="1"/>
</dbReference>
<dbReference type="Pfam" id="PF00535">
    <property type="entry name" value="Glycos_transf_2"/>
    <property type="match status" value="1"/>
</dbReference>
<dbReference type="SUPFAM" id="SSF53448">
    <property type="entry name" value="Nucleotide-diphospho-sugar transferases"/>
    <property type="match status" value="1"/>
</dbReference>
<proteinExistence type="inferred from homology"/>
<sequence>MKWLSRILTVIVTMSMACGALIFNRRHQLKAKTLNFNHKALTIIIPARNEEKRIGHLLHSIIQQQVPVDVIVMNDGSTDETARVARSYGATVVDVVDDTDGKWYGKSHACYQGVTHACTNRIAFVDADVTFLRKDAVETLINQYQLQGEKGLLSVQPYHITKRFYEGFSAIFNLMTVVGMNVFSTLDDGRTNQHAFGPVTLTNKEDYYATGGHKSANRHIIEGFALGSAYTSQSLPVTVYEGFPFVAFRMYQEGFQSLQEGWTKHLSTGAGGTKPKIMTAIVLWLFGSIASILGLCLSLKYRQMSVRKMVALYLSYTTQFIYLHRRVGQFSNLLMVCHPLLFMFFTKIFIQSWKQTHRYGVVEWKGRQYSISKEQ</sequence>
<comment type="function">
    <text evidence="1">Catalyzes the glycosylation of 4,4'-diaponeurosporenoate, i.e. the esterification of glucose at the C1'' position with the carboxyl group of 4,4'-diaponeurosporenic acid, to form glycosyl-4,4'-diaponeurosporenoate. This is a step in the biosynthesis of staphyloxanthin, an orange pigment present in most staphylococci strains (By similarity).</text>
</comment>
<comment type="pathway">
    <text>Carotenoid biosynthesis; staphyloxanthin biosynthesis; staphyloxanthin from farnesyl diphosphate: step 4/5.</text>
</comment>
<comment type="subcellular location">
    <subcellularLocation>
        <location evidence="3">Cell membrane</location>
        <topology evidence="3">Multi-pass membrane protein</topology>
    </subcellularLocation>
</comment>
<comment type="similarity">
    <text evidence="3">Belongs to the glycosyltransferase 2 family. CrtQ subfamily.</text>
</comment>
<name>CRTQ_STAA8</name>
<protein>
    <recommendedName>
        <fullName>4,4'-diaponeurosporenoate glycosyltransferase</fullName>
        <ecNumber>2.4.1.-</ecNumber>
    </recommendedName>
</protein>
<accession>Q2FV58</accession>
<feature type="chain" id="PRO_0000284865" description="4,4'-diaponeurosporenoate glycosyltransferase">
    <location>
        <begin position="1"/>
        <end position="375"/>
    </location>
</feature>
<feature type="transmembrane region" description="Helical" evidence="2">
    <location>
        <begin position="3"/>
        <end position="23"/>
    </location>
</feature>
<feature type="transmembrane region" description="Helical" evidence="2">
    <location>
        <begin position="164"/>
        <end position="184"/>
    </location>
</feature>
<feature type="transmembrane region" description="Helical" evidence="2">
    <location>
        <begin position="277"/>
        <end position="297"/>
    </location>
</feature>
<feature type="transmembrane region" description="Helical" evidence="2">
    <location>
        <begin position="330"/>
        <end position="350"/>
    </location>
</feature>